<accession>Q7A875</accession>
<sequence>MKIPPQRQLAIQYNVNRVTIIKSIELLEAEGFIYTKVGSGTYVNDYLNEAHITNKWSEMMLWSSQQRSQYTVQLINKIETDDSYIHISKGELGISLMPHIQLKKAMSNTASHIEDLSFGYNNGYGYIKLRDIIVERMSKQGINVGRENVMITSGALHAIQLLSIGFLGQDAIIISNTPSYIHSTNVFEQLNFRHIDVPYNQINEINTIIDRFINFKNKAIYIEPRFNNPTGRSLTNEQKKNIITYSERHNIPIIEDDIFRDIFFSDPTPAIKTYDKLGKVIHISSFSKTIAPAIRIGWIVASEKIIEQLADVRMQIDYGSSILSQMVVYEMLKNKSYDKHLVKLRYVLKDKRDFMLNILNNLFKDIAHWEVPSGGYFVWLVFKIDIDIKYLFYELLSKEKILINPGYIYGSKEKSIRLSFAFESNENIKHALYKIYTYVKKV</sequence>
<keyword id="KW-0010">Activator</keyword>
<keyword id="KW-0032">Aminotransferase</keyword>
<keyword id="KW-0238">DNA-binding</keyword>
<keyword id="KW-0663">Pyridoxal phosphate</keyword>
<keyword id="KW-0678">Repressor</keyword>
<keyword id="KW-0804">Transcription</keyword>
<keyword id="KW-0805">Transcription regulation</keyword>
<keyword id="KW-0808">Transferase</keyword>
<protein>
    <recommendedName>
        <fullName>HTH-type transcriptional regulator NorG</fullName>
    </recommendedName>
</protein>
<gene>
    <name type="primary">norG</name>
    <name type="ordered locus">SA0104</name>
</gene>
<dbReference type="EMBL" id="BA000018">
    <property type="protein sequence ID" value="BAB41323.1"/>
    <property type="molecule type" value="Genomic_DNA"/>
</dbReference>
<dbReference type="PIR" id="H89770">
    <property type="entry name" value="H89770"/>
</dbReference>
<dbReference type="SMR" id="Q7A875"/>
<dbReference type="EnsemblBacteria" id="BAB41323">
    <property type="protein sequence ID" value="BAB41323"/>
    <property type="gene ID" value="BAB41323"/>
</dbReference>
<dbReference type="KEGG" id="sau:SA0104"/>
<dbReference type="HOGENOM" id="CLU_017584_0_0_9"/>
<dbReference type="GO" id="GO:0003677">
    <property type="term" value="F:DNA binding"/>
    <property type="evidence" value="ECO:0007669"/>
    <property type="project" value="UniProtKB-KW"/>
</dbReference>
<dbReference type="GO" id="GO:0003700">
    <property type="term" value="F:DNA-binding transcription factor activity"/>
    <property type="evidence" value="ECO:0007669"/>
    <property type="project" value="InterPro"/>
</dbReference>
<dbReference type="GO" id="GO:0030170">
    <property type="term" value="F:pyridoxal phosphate binding"/>
    <property type="evidence" value="ECO:0007669"/>
    <property type="project" value="InterPro"/>
</dbReference>
<dbReference type="GO" id="GO:0008483">
    <property type="term" value="F:transaminase activity"/>
    <property type="evidence" value="ECO:0007669"/>
    <property type="project" value="UniProtKB-KW"/>
</dbReference>
<dbReference type="GO" id="GO:1901605">
    <property type="term" value="P:alpha-amino acid metabolic process"/>
    <property type="evidence" value="ECO:0007669"/>
    <property type="project" value="TreeGrafter"/>
</dbReference>
<dbReference type="GO" id="GO:0009058">
    <property type="term" value="P:biosynthetic process"/>
    <property type="evidence" value="ECO:0007669"/>
    <property type="project" value="InterPro"/>
</dbReference>
<dbReference type="CDD" id="cd00609">
    <property type="entry name" value="AAT_like"/>
    <property type="match status" value="1"/>
</dbReference>
<dbReference type="CDD" id="cd07377">
    <property type="entry name" value="WHTH_GntR"/>
    <property type="match status" value="1"/>
</dbReference>
<dbReference type="FunFam" id="3.40.640.10:FF:000023">
    <property type="entry name" value="Transcriptional regulator, GntR family"/>
    <property type="match status" value="1"/>
</dbReference>
<dbReference type="Gene3D" id="3.90.1150.10">
    <property type="entry name" value="Aspartate Aminotransferase, domain 1"/>
    <property type="match status" value="1"/>
</dbReference>
<dbReference type="Gene3D" id="3.40.640.10">
    <property type="entry name" value="Type I PLP-dependent aspartate aminotransferase-like (Major domain)"/>
    <property type="match status" value="1"/>
</dbReference>
<dbReference type="Gene3D" id="1.10.10.10">
    <property type="entry name" value="Winged helix-like DNA-binding domain superfamily/Winged helix DNA-binding domain"/>
    <property type="match status" value="1"/>
</dbReference>
<dbReference type="InterPro" id="IPR004839">
    <property type="entry name" value="Aminotransferase_I/II_large"/>
</dbReference>
<dbReference type="InterPro" id="IPR050859">
    <property type="entry name" value="Class-I_PLP-dep_aminotransf"/>
</dbReference>
<dbReference type="InterPro" id="IPR015424">
    <property type="entry name" value="PyrdxlP-dep_Trfase"/>
</dbReference>
<dbReference type="InterPro" id="IPR015421">
    <property type="entry name" value="PyrdxlP-dep_Trfase_major"/>
</dbReference>
<dbReference type="InterPro" id="IPR015422">
    <property type="entry name" value="PyrdxlP-dep_Trfase_small"/>
</dbReference>
<dbReference type="InterPro" id="IPR000524">
    <property type="entry name" value="Tscrpt_reg_HTH_GntR"/>
</dbReference>
<dbReference type="InterPro" id="IPR036388">
    <property type="entry name" value="WH-like_DNA-bd_sf"/>
</dbReference>
<dbReference type="InterPro" id="IPR036390">
    <property type="entry name" value="WH_DNA-bd_sf"/>
</dbReference>
<dbReference type="PANTHER" id="PTHR42790">
    <property type="entry name" value="AMINOTRANSFERASE"/>
    <property type="match status" value="1"/>
</dbReference>
<dbReference type="PANTHER" id="PTHR42790:SF19">
    <property type="entry name" value="KYNURENINE_ALPHA-AMINOADIPATE AMINOTRANSFERASE, MITOCHONDRIAL"/>
    <property type="match status" value="1"/>
</dbReference>
<dbReference type="Pfam" id="PF00155">
    <property type="entry name" value="Aminotran_1_2"/>
    <property type="match status" value="1"/>
</dbReference>
<dbReference type="Pfam" id="PF00392">
    <property type="entry name" value="GntR"/>
    <property type="match status" value="1"/>
</dbReference>
<dbReference type="PRINTS" id="PR00035">
    <property type="entry name" value="HTHGNTR"/>
</dbReference>
<dbReference type="SMART" id="SM00345">
    <property type="entry name" value="HTH_GNTR"/>
    <property type="match status" value="1"/>
</dbReference>
<dbReference type="SUPFAM" id="SSF53383">
    <property type="entry name" value="PLP-dependent transferases"/>
    <property type="match status" value="1"/>
</dbReference>
<dbReference type="SUPFAM" id="SSF46785">
    <property type="entry name" value="Winged helix' DNA-binding domain"/>
    <property type="match status" value="1"/>
</dbReference>
<dbReference type="PROSITE" id="PS50949">
    <property type="entry name" value="HTH_GNTR"/>
    <property type="match status" value="1"/>
</dbReference>
<proteinExistence type="inferred from homology"/>
<organism>
    <name type="scientific">Staphylococcus aureus (strain N315)</name>
    <dbReference type="NCBI Taxonomy" id="158879"/>
    <lineage>
        <taxon>Bacteria</taxon>
        <taxon>Bacillati</taxon>
        <taxon>Bacillota</taxon>
        <taxon>Bacilli</taxon>
        <taxon>Bacillales</taxon>
        <taxon>Staphylococcaceae</taxon>
        <taxon>Staphylococcus</taxon>
    </lineage>
</organism>
<feature type="initiator methionine" description="Removed" evidence="1">
    <location>
        <position position="1"/>
    </location>
</feature>
<feature type="chain" id="PRO_0000305322" description="HTH-type transcriptional regulator NorG">
    <location>
        <begin position="2"/>
        <end position="442"/>
    </location>
</feature>
<feature type="domain" description="HTH gntR-type" evidence="2">
    <location>
        <begin position="2"/>
        <end position="46"/>
    </location>
</feature>
<feature type="DNA-binding region" description="H-T-H motif" evidence="2">
    <location>
        <begin position="6"/>
        <end position="25"/>
    </location>
</feature>
<feature type="modified residue" description="N6-(pyridoxal phosphate)lysine" evidence="1">
    <location>
        <position position="288"/>
    </location>
</feature>
<evidence type="ECO:0000250" key="1"/>
<evidence type="ECO:0000255" key="2">
    <source>
        <dbReference type="PROSITE-ProRule" id="PRU00307"/>
    </source>
</evidence>
<evidence type="ECO:0000305" key="3"/>
<comment type="function">
    <text evidence="1">Positively regulates the expression of the NorB efflux pump and negatively regulates the expression of the AbcA efflux pump. Binds specifically to the promoters of norA, norB and norC and abcA genes. Could also have an aminotransferase activity (By similarity).</text>
</comment>
<comment type="cofactor">
    <cofactor evidence="3">
        <name>pyridoxal 5'-phosphate</name>
        <dbReference type="ChEBI" id="CHEBI:597326"/>
    </cofactor>
</comment>
<comment type="similarity">
    <text evidence="3">In the C-terminal section; belongs to the class-I pyridoxal-phosphate-dependent aminotransferase family.</text>
</comment>
<reference key="1">
    <citation type="journal article" date="2001" name="Lancet">
        <title>Whole genome sequencing of meticillin-resistant Staphylococcus aureus.</title>
        <authorList>
            <person name="Kuroda M."/>
            <person name="Ohta T."/>
            <person name="Uchiyama I."/>
            <person name="Baba T."/>
            <person name="Yuzawa H."/>
            <person name="Kobayashi I."/>
            <person name="Cui L."/>
            <person name="Oguchi A."/>
            <person name="Aoki K."/>
            <person name="Nagai Y."/>
            <person name="Lian J.-Q."/>
            <person name="Ito T."/>
            <person name="Kanamori M."/>
            <person name="Matsumaru H."/>
            <person name="Maruyama A."/>
            <person name="Murakami H."/>
            <person name="Hosoyama A."/>
            <person name="Mizutani-Ui Y."/>
            <person name="Takahashi N.K."/>
            <person name="Sawano T."/>
            <person name="Inoue R."/>
            <person name="Kaito C."/>
            <person name="Sekimizu K."/>
            <person name="Hirakawa H."/>
            <person name="Kuhara S."/>
            <person name="Goto S."/>
            <person name="Yabuzaki J."/>
            <person name="Kanehisa M."/>
            <person name="Yamashita A."/>
            <person name="Oshima K."/>
            <person name="Furuya K."/>
            <person name="Yoshino C."/>
            <person name="Shiba T."/>
            <person name="Hattori M."/>
            <person name="Ogasawara N."/>
            <person name="Hayashi H."/>
            <person name="Hiramatsu K."/>
        </authorList>
    </citation>
    <scope>NUCLEOTIDE SEQUENCE [LARGE SCALE GENOMIC DNA]</scope>
    <source>
        <strain>N315</strain>
    </source>
</reference>
<name>NORG_STAAN</name>